<name>GLPG_YERPN</name>
<sequence length="278" mass="31305">MTRVIVISNLRLAQAFVDYMATHHVALEIRPDAQGVEIWLADDEQLSAVQHELEQFLLDPLNPRYQAASWQAGNVNSNLPYQRFSYLQTLRSQAGPLTLSVMVLCIAIYILMLITGDMAVMSWLAWPYNSSQYLQIWRWVSHAFLHFSLLHILFNLMWWWYLGGQMEKRLGTSKLLVLTIVSAVFSGWGQSLFSGANFGGLSGVVYALMGYVWLTGERAPERGISLPRGLMAFSVLWLIAGYFDILGLSIANAAHVSGLIIGLLMAFWDTRNSARTVQ</sequence>
<dbReference type="EC" id="3.4.21.105" evidence="1"/>
<dbReference type="EMBL" id="CP000305">
    <property type="protein sequence ID" value="ABG20274.1"/>
    <property type="molecule type" value="Genomic_DNA"/>
</dbReference>
<dbReference type="EMBL" id="ACNQ01000019">
    <property type="protein sequence ID" value="EEO74869.1"/>
    <property type="molecule type" value="Genomic_DNA"/>
</dbReference>
<dbReference type="RefSeq" id="WP_002216348.1">
    <property type="nucleotide sequence ID" value="NZ_ACNQ01000019.1"/>
</dbReference>
<dbReference type="SMR" id="Q1CCK6"/>
<dbReference type="GeneID" id="57974477"/>
<dbReference type="KEGG" id="ypn:YPN_3947"/>
<dbReference type="HOGENOM" id="CLU_058989_0_0_6"/>
<dbReference type="Proteomes" id="UP000008936">
    <property type="component" value="Chromosome"/>
</dbReference>
<dbReference type="GO" id="GO:0005886">
    <property type="term" value="C:plasma membrane"/>
    <property type="evidence" value="ECO:0007669"/>
    <property type="project" value="UniProtKB-SubCell"/>
</dbReference>
<dbReference type="GO" id="GO:0004252">
    <property type="term" value="F:serine-type endopeptidase activity"/>
    <property type="evidence" value="ECO:0007669"/>
    <property type="project" value="UniProtKB-UniRule"/>
</dbReference>
<dbReference type="GO" id="GO:0006508">
    <property type="term" value="P:proteolysis"/>
    <property type="evidence" value="ECO:0007669"/>
    <property type="project" value="UniProtKB-UniRule"/>
</dbReference>
<dbReference type="Gene3D" id="3.30.70.2350">
    <property type="match status" value="1"/>
</dbReference>
<dbReference type="Gene3D" id="1.20.1540.10">
    <property type="entry name" value="Rhomboid-like"/>
    <property type="match status" value="1"/>
</dbReference>
<dbReference type="HAMAP" id="MF_01594">
    <property type="entry name" value="Rhomboid_GlpG"/>
    <property type="match status" value="1"/>
</dbReference>
<dbReference type="InterPro" id="IPR038236">
    <property type="entry name" value="GlpG_N_sf"/>
</dbReference>
<dbReference type="InterPro" id="IPR022732">
    <property type="entry name" value="Peptidase_S54_GlpG_N"/>
</dbReference>
<dbReference type="InterPro" id="IPR022764">
    <property type="entry name" value="Peptidase_S54_rhomboid_dom"/>
</dbReference>
<dbReference type="InterPro" id="IPR035952">
    <property type="entry name" value="Rhomboid-like_sf"/>
</dbReference>
<dbReference type="InterPro" id="IPR023662">
    <property type="entry name" value="Rhomboid_protease_GlpG"/>
</dbReference>
<dbReference type="NCBIfam" id="NF008155">
    <property type="entry name" value="PRK10907.1"/>
    <property type="match status" value="1"/>
</dbReference>
<dbReference type="NCBIfam" id="TIGR04239">
    <property type="entry name" value="rhombo_GlpG"/>
    <property type="match status" value="1"/>
</dbReference>
<dbReference type="PANTHER" id="PTHR43066:SF26">
    <property type="entry name" value="RHOMBOID PROTEASE GLPG"/>
    <property type="match status" value="1"/>
</dbReference>
<dbReference type="PANTHER" id="PTHR43066">
    <property type="entry name" value="RHOMBOID-RELATED PROTEIN"/>
    <property type="match status" value="1"/>
</dbReference>
<dbReference type="Pfam" id="PF01694">
    <property type="entry name" value="Rhomboid"/>
    <property type="match status" value="1"/>
</dbReference>
<dbReference type="Pfam" id="PF12122">
    <property type="entry name" value="Rhomboid_N"/>
    <property type="match status" value="1"/>
</dbReference>
<dbReference type="SUPFAM" id="SSF144091">
    <property type="entry name" value="Rhomboid-like"/>
    <property type="match status" value="1"/>
</dbReference>
<feature type="chain" id="PRO_0000321702" description="Rhomboid protease GlpG">
    <location>
        <begin position="1"/>
        <end position="278"/>
    </location>
</feature>
<feature type="transmembrane region" description="Helical" evidence="1">
    <location>
        <begin position="94"/>
        <end position="114"/>
    </location>
</feature>
<feature type="transmembrane region" description="Helical" evidence="1">
    <location>
        <begin position="143"/>
        <end position="163"/>
    </location>
</feature>
<feature type="transmembrane region" description="Helical" evidence="1">
    <location>
        <begin position="175"/>
        <end position="195"/>
    </location>
</feature>
<feature type="transmembrane region" description="Helical" evidence="1">
    <location>
        <begin position="196"/>
        <end position="216"/>
    </location>
</feature>
<feature type="transmembrane region" description="Helical" evidence="1">
    <location>
        <begin position="224"/>
        <end position="241"/>
    </location>
</feature>
<feature type="transmembrane region" description="Helical" evidence="1">
    <location>
        <begin position="245"/>
        <end position="267"/>
    </location>
</feature>
<feature type="active site" description="Nucleophile" evidence="1">
    <location>
        <position position="202"/>
    </location>
</feature>
<feature type="active site" evidence="1">
    <location>
        <position position="255"/>
    </location>
</feature>
<accession>Q1CCK6</accession>
<accession>D1Q2W6</accession>
<gene>
    <name evidence="1" type="primary">glpG</name>
    <name type="ordered locus">YPN_3947</name>
    <name type="ORF">YP516_4479</name>
</gene>
<reference key="1">
    <citation type="journal article" date="2006" name="J. Bacteriol.">
        <title>Complete genome sequence of Yersinia pestis strains Antiqua and Nepal516: evidence of gene reduction in an emerging pathogen.</title>
        <authorList>
            <person name="Chain P.S.G."/>
            <person name="Hu P."/>
            <person name="Malfatti S.A."/>
            <person name="Radnedge L."/>
            <person name="Larimer F."/>
            <person name="Vergez L.M."/>
            <person name="Worsham P."/>
            <person name="Chu M.C."/>
            <person name="Andersen G.L."/>
        </authorList>
    </citation>
    <scope>NUCLEOTIDE SEQUENCE [LARGE SCALE GENOMIC DNA]</scope>
    <source>
        <strain>Nepal516</strain>
    </source>
</reference>
<reference key="2">
    <citation type="submission" date="2009-04" db="EMBL/GenBank/DDBJ databases">
        <title>Yersinia pestis Nepal516A whole genome shotgun sequencing project.</title>
        <authorList>
            <person name="Plunkett G. III"/>
            <person name="Anderson B.D."/>
            <person name="Baumler D.J."/>
            <person name="Burland V."/>
            <person name="Cabot E.L."/>
            <person name="Glasner J.D."/>
            <person name="Mau B."/>
            <person name="Neeno-Eckwall E."/>
            <person name="Perna N.T."/>
            <person name="Munk A.C."/>
            <person name="Tapia R."/>
            <person name="Green L.D."/>
            <person name="Rogers Y.C."/>
            <person name="Detter J.C."/>
            <person name="Bruce D.C."/>
            <person name="Brettin T.S."/>
        </authorList>
    </citation>
    <scope>NUCLEOTIDE SEQUENCE [LARGE SCALE GENOMIC DNA]</scope>
    <source>
        <strain>Nepal516</strain>
    </source>
</reference>
<organism>
    <name type="scientific">Yersinia pestis bv. Antiqua (strain Nepal516)</name>
    <dbReference type="NCBI Taxonomy" id="377628"/>
    <lineage>
        <taxon>Bacteria</taxon>
        <taxon>Pseudomonadati</taxon>
        <taxon>Pseudomonadota</taxon>
        <taxon>Gammaproteobacteria</taxon>
        <taxon>Enterobacterales</taxon>
        <taxon>Yersiniaceae</taxon>
        <taxon>Yersinia</taxon>
    </lineage>
</organism>
<protein>
    <recommendedName>
        <fullName evidence="1">Rhomboid protease GlpG</fullName>
        <ecNumber evidence="1">3.4.21.105</ecNumber>
    </recommendedName>
    <alternativeName>
        <fullName evidence="1">Intramembrane serine protease</fullName>
    </alternativeName>
</protein>
<comment type="function">
    <text evidence="1">Rhomboid-type serine protease that catalyzes intramembrane proteolysis.</text>
</comment>
<comment type="catalytic activity">
    <reaction evidence="1">
        <text>Cleaves type-1 transmembrane domains using a catalytic dyad composed of serine and histidine that are contributed by different transmembrane domains.</text>
        <dbReference type="EC" id="3.4.21.105"/>
    </reaction>
</comment>
<comment type="subcellular location">
    <subcellularLocation>
        <location evidence="1">Cell inner membrane</location>
        <topology evidence="1">Multi-pass membrane protein</topology>
    </subcellularLocation>
</comment>
<comment type="similarity">
    <text evidence="1">Belongs to the peptidase S54 family.</text>
</comment>
<evidence type="ECO:0000255" key="1">
    <source>
        <dbReference type="HAMAP-Rule" id="MF_01594"/>
    </source>
</evidence>
<proteinExistence type="inferred from homology"/>
<keyword id="KW-0997">Cell inner membrane</keyword>
<keyword id="KW-1003">Cell membrane</keyword>
<keyword id="KW-0378">Hydrolase</keyword>
<keyword id="KW-0472">Membrane</keyword>
<keyword id="KW-0645">Protease</keyword>
<keyword id="KW-0720">Serine protease</keyword>
<keyword id="KW-0812">Transmembrane</keyword>
<keyword id="KW-1133">Transmembrane helix</keyword>